<feature type="chain" id="PRO_0000422714" description="Ammonium/H(+) antiporter subunit AmhT">
    <location>
        <begin position="1"/>
        <end position="390"/>
    </location>
</feature>
<feature type="transmembrane region" description="Helical" evidence="1">
    <location>
        <begin position="2"/>
        <end position="22"/>
    </location>
</feature>
<feature type="transmembrane region" description="Helical" evidence="1">
    <location>
        <begin position="31"/>
        <end position="51"/>
    </location>
</feature>
<feature type="transmembrane region" description="Helical" evidence="1">
    <location>
        <begin position="52"/>
        <end position="72"/>
    </location>
</feature>
<feature type="transmembrane region" description="Helical" evidence="1">
    <location>
        <begin position="94"/>
        <end position="114"/>
    </location>
</feature>
<feature type="transmembrane region" description="Helical" evidence="1">
    <location>
        <begin position="143"/>
        <end position="163"/>
    </location>
</feature>
<feature type="transmembrane region" description="Helical" evidence="1">
    <location>
        <begin position="178"/>
        <end position="198"/>
    </location>
</feature>
<feature type="transmembrane region" description="Helical" evidence="1">
    <location>
        <begin position="212"/>
        <end position="232"/>
    </location>
</feature>
<feature type="transmembrane region" description="Helical" evidence="1">
    <location>
        <begin position="266"/>
        <end position="286"/>
    </location>
</feature>
<feature type="transmembrane region" description="Helical" evidence="1">
    <location>
        <begin position="288"/>
        <end position="308"/>
    </location>
</feature>
<feature type="transmembrane region" description="Helical" evidence="1">
    <location>
        <begin position="351"/>
        <end position="371"/>
    </location>
</feature>
<keyword id="KW-0924">Ammonia transport</keyword>
<keyword id="KW-0050">Antiport</keyword>
<keyword id="KW-1003">Cell membrane</keyword>
<keyword id="KW-0406">Ion transport</keyword>
<keyword id="KW-0472">Membrane</keyword>
<keyword id="KW-1185">Reference proteome</keyword>
<keyword id="KW-0812">Transmembrane</keyword>
<keyword id="KW-1133">Transmembrane helix</keyword>
<keyword id="KW-0813">Transport</keyword>
<proteinExistence type="evidence at protein level"/>
<accession>D3FSJ3</accession>
<accession>O50576</accession>
<reference key="1">
    <citation type="journal article" date="2003" name="J. Bacteriol.">
        <title>Mutational loss of a K+ and NH4+ transporter affects the growth and endospore formation of alkaliphilic Bacillus pseudofirmus OF4.</title>
        <authorList>
            <person name="Wei Y."/>
            <person name="Southworth T.W."/>
            <person name="Kloster H."/>
            <person name="Ito M."/>
            <person name="Guffanti A.A."/>
            <person name="Moir A."/>
            <person name="Krulwich T.A."/>
        </authorList>
    </citation>
    <scope>NUCLEOTIDE SEQUENCE [GENOMIC DNA]</scope>
    <scope>FUNCTION</scope>
    <scope>DISRUPTION PHENOTYPE</scope>
    <source>
        <strain>ATCC BAA-2126 / JCM 17055 / OF4</strain>
    </source>
</reference>
<reference key="2">
    <citation type="journal article" date="2011" name="Environ. Microbiol.">
        <title>Genome of alkaliphilic Bacillus pseudofirmus OF4 reveals adaptations that support the ability to grow in an external pH range from 7.5 to 11.4.</title>
        <authorList>
            <person name="Janto B."/>
            <person name="Ahmed A."/>
            <person name="Ito M."/>
            <person name="Liu J."/>
            <person name="Hicks D.B."/>
            <person name="Pagni S."/>
            <person name="Fackelmayer O.J."/>
            <person name="Smith T.A."/>
            <person name="Earl J."/>
            <person name="Elbourne L.D."/>
            <person name="Hassan K."/>
            <person name="Paulsen I.T."/>
            <person name="Kolsto A.B."/>
            <person name="Tourasse N.J."/>
            <person name="Ehrlich G.D."/>
            <person name="Boissy R."/>
            <person name="Ivey D.M."/>
            <person name="Li G."/>
            <person name="Xue Y."/>
            <person name="Ma Y."/>
            <person name="Hu F.Z."/>
            <person name="Krulwich T.A."/>
        </authorList>
    </citation>
    <scope>NUCLEOTIDE SEQUENCE [LARGE SCALE GENOMIC DNA]</scope>
    <source>
        <strain>ATCC BAA-2126 / JCM 17055 / OF4</strain>
    </source>
</reference>
<reference key="3">
    <citation type="journal article" date="2007" name="Proc. Natl. Acad. Sci. U.S.A.">
        <title>Three two-component transporters with channel-like properties have monovalent cation/proton antiport activity.</title>
        <authorList>
            <person name="Fujisawa M."/>
            <person name="Ito M."/>
            <person name="Krulwich T.A."/>
        </authorList>
    </citation>
    <scope>FUNCTION AS AN ANTIPORTER</scope>
    <scope>ACTIVITY REGULATION</scope>
    <scope>SUBUNIT</scope>
    <source>
        <strain>ATCC BAA-2126 / JCM 17055 / OF4</strain>
    </source>
</reference>
<organism>
    <name type="scientific">Alkalihalophilus pseudofirmus (strain ATCC BAA-2126 / JCM 17055 / OF4)</name>
    <name type="common">Bacillus pseudofirmus</name>
    <dbReference type="NCBI Taxonomy" id="398511"/>
    <lineage>
        <taxon>Bacteria</taxon>
        <taxon>Bacillati</taxon>
        <taxon>Bacillota</taxon>
        <taxon>Bacilli</taxon>
        <taxon>Bacillales</taxon>
        <taxon>Bacillaceae</taxon>
        <taxon>Alkalihalophilus</taxon>
    </lineage>
</organism>
<sequence>MVIPELFSAGLILLLLFITGFVGMKMKIPDVVIFILLGIAVGGLLSGSHLLHFAGEVGIVLLFFMLGMEFPLKQLMSIAKKVLRAGILDVALSFGVTMAICMMMGLDVITSLIIGGVAYATSSSITAKMLESSKRMANPESEFMLGLLIFEDLVAPILVAVLVGLTAGMALTAGSMSLLVVKVVALVAGAVILGVFLFRKLGSFFDRHMKHDLFILFVIGLALMYGGLALYLDLSEVLGAFLAGIMLAEVKRTHELELMVVRFRDLLLPLFFLYFGTTISFSEGIPMIPLLILVLVWSVIAKVIVGVLGGRWYGLTKKVSLRAGLSLTQRGEFSIIIASLAAGSIKAFSSVFILASAMIGILLFQFAPSIANKFYGKKAKTSVKQHVGSA</sequence>
<name>AMHT_ALKPO</name>
<gene>
    <name type="primary">amhT</name>
    <name type="ordered locus">BpOF4_09530</name>
</gene>
<protein>
    <recommendedName>
        <fullName>Ammonium/H(+) antiporter subunit AmhT</fullName>
    </recommendedName>
</protein>
<evidence type="ECO:0000255" key="1"/>
<evidence type="ECO:0000269" key="2">
    <source>
    </source>
</evidence>
<evidence type="ECO:0000269" key="3">
    <source>
    </source>
</evidence>
<evidence type="ECO:0000305" key="4"/>
<evidence type="ECO:0000305" key="5">
    <source>
    </source>
</evidence>
<comment type="function">
    <text evidence="2 3">Ammonium/proton antiporter that mediates the efflux of ammonium ions. Can also transport potassium or rubidium, but not sodium or lithium.</text>
</comment>
<comment type="activity regulation">
    <text evidence="3">AmhT alone exhibits antiport activity, but interaction with AmhM confers different properties, such as higher KM for potassium.</text>
</comment>
<comment type="subunit">
    <text evidence="5">Interacts with AmhM.</text>
</comment>
<comment type="subcellular location">
    <subcellularLocation>
        <location evidence="4">Cell membrane</location>
        <topology evidence="4">Multi-pass membrane protein</topology>
    </subcellularLocation>
</comment>
<comment type="disruption phenotype">
    <text evidence="2">Deletion affects endospore formation and germination.</text>
</comment>
<comment type="similarity">
    <text evidence="4">Belongs to the monovalent cation:proton antiporter 2 (CPA2) transporter (TC 2.A.37) family.</text>
</comment>
<dbReference type="EMBL" id="U89914">
    <property type="protein sequence ID" value="AAB87747.2"/>
    <property type="molecule type" value="Genomic_DNA"/>
</dbReference>
<dbReference type="EMBL" id="CP001878">
    <property type="protein sequence ID" value="ADC49961.1"/>
    <property type="molecule type" value="Genomic_DNA"/>
</dbReference>
<dbReference type="PIR" id="T52552">
    <property type="entry name" value="T52552"/>
</dbReference>
<dbReference type="RefSeq" id="WP_012957327.1">
    <property type="nucleotide sequence ID" value="NC_013791.2"/>
</dbReference>
<dbReference type="SMR" id="D3FSJ3"/>
<dbReference type="STRING" id="398511.BpOF4_09530"/>
<dbReference type="TCDB" id="2.A.37.5.1">
    <property type="family name" value="the monovalent cation:proton antiporter-2 (cpa2) family"/>
</dbReference>
<dbReference type="KEGG" id="bpf:BpOF4_09530"/>
<dbReference type="eggNOG" id="COG0475">
    <property type="taxonomic scope" value="Bacteria"/>
</dbReference>
<dbReference type="HOGENOM" id="CLU_005126_4_2_9"/>
<dbReference type="Proteomes" id="UP000001544">
    <property type="component" value="Chromosome"/>
</dbReference>
<dbReference type="GO" id="GO:0005886">
    <property type="term" value="C:plasma membrane"/>
    <property type="evidence" value="ECO:0007669"/>
    <property type="project" value="UniProtKB-SubCell"/>
</dbReference>
<dbReference type="GO" id="GO:0015297">
    <property type="term" value="F:antiporter activity"/>
    <property type="evidence" value="ECO:0007669"/>
    <property type="project" value="UniProtKB-KW"/>
</dbReference>
<dbReference type="GO" id="GO:0072488">
    <property type="term" value="P:ammonium transmembrane transport"/>
    <property type="evidence" value="ECO:0007669"/>
    <property type="project" value="UniProtKB-KW"/>
</dbReference>
<dbReference type="GO" id="GO:1902600">
    <property type="term" value="P:proton transmembrane transport"/>
    <property type="evidence" value="ECO:0007669"/>
    <property type="project" value="InterPro"/>
</dbReference>
<dbReference type="Gene3D" id="1.20.1530.20">
    <property type="match status" value="1"/>
</dbReference>
<dbReference type="InterPro" id="IPR006153">
    <property type="entry name" value="Cation/H_exchanger_TM"/>
</dbReference>
<dbReference type="InterPro" id="IPR038770">
    <property type="entry name" value="Na+/solute_symporter_sf"/>
</dbReference>
<dbReference type="PANTHER" id="PTHR42751">
    <property type="entry name" value="SODIUM/HYDROGEN EXCHANGER FAMILY/TRKA DOMAIN PROTEIN"/>
    <property type="match status" value="1"/>
</dbReference>
<dbReference type="PANTHER" id="PTHR42751:SF3">
    <property type="entry name" value="SODIUM_GLUTAMATE SYMPORTER"/>
    <property type="match status" value="1"/>
</dbReference>
<dbReference type="Pfam" id="PF00999">
    <property type="entry name" value="Na_H_Exchanger"/>
    <property type="match status" value="1"/>
</dbReference>